<dbReference type="EC" id="2.3.2.27"/>
<dbReference type="EMBL" id="Z71284">
    <property type="protein sequence ID" value="CAA95868.1"/>
    <property type="molecule type" value="Genomic_DNA"/>
</dbReference>
<dbReference type="EMBL" id="Z71283">
    <property type="protein sequence ID" value="CAA95867.1"/>
    <property type="molecule type" value="Genomic_DNA"/>
</dbReference>
<dbReference type="EMBL" id="BK006947">
    <property type="protein sequence ID" value="DAA10535.2"/>
    <property type="molecule type" value="Genomic_DNA"/>
</dbReference>
<dbReference type="PIR" id="S62919">
    <property type="entry name" value="S62919"/>
</dbReference>
<dbReference type="RefSeq" id="NP_014390.2">
    <property type="nucleotide sequence ID" value="NM_001182847.2"/>
</dbReference>
<dbReference type="BioGRID" id="35817">
    <property type="interactions" value="125"/>
</dbReference>
<dbReference type="ComplexPortal" id="CPX-3248">
    <property type="entry name" value="Asi ubiquitin ligase complex"/>
</dbReference>
<dbReference type="DIP" id="DIP-5065N"/>
<dbReference type="FunCoup" id="P53983">
    <property type="interactions" value="41"/>
</dbReference>
<dbReference type="IntAct" id="P53983">
    <property type="interactions" value="11"/>
</dbReference>
<dbReference type="MINT" id="P53983"/>
<dbReference type="STRING" id="4932.YNL008C"/>
<dbReference type="GlyCosmos" id="P53983">
    <property type="glycosylation" value="4 sites, No reported glycans"/>
</dbReference>
<dbReference type="GlyGen" id="P53983">
    <property type="glycosylation" value="4 sites"/>
</dbReference>
<dbReference type="iPTMnet" id="P53983"/>
<dbReference type="PaxDb" id="4932-YNL008C"/>
<dbReference type="PeptideAtlas" id="P53983"/>
<dbReference type="EnsemblFungi" id="YNL008C_mRNA">
    <property type="protein sequence ID" value="YNL008C"/>
    <property type="gene ID" value="YNL008C"/>
</dbReference>
<dbReference type="GeneID" id="855724"/>
<dbReference type="KEGG" id="sce:YNL008C"/>
<dbReference type="AGR" id="SGD:S000004953"/>
<dbReference type="SGD" id="S000004953">
    <property type="gene designation" value="ASI3"/>
</dbReference>
<dbReference type="VEuPathDB" id="FungiDB:YNL008C"/>
<dbReference type="eggNOG" id="ENOG502S2K4">
    <property type="taxonomic scope" value="Eukaryota"/>
</dbReference>
<dbReference type="GeneTree" id="ENSGT00940000176791"/>
<dbReference type="HOGENOM" id="CLU_026112_0_0_1"/>
<dbReference type="InParanoid" id="P53983"/>
<dbReference type="OMA" id="CLSHCIE"/>
<dbReference type="OrthoDB" id="66726at2759"/>
<dbReference type="BioCyc" id="YEAST:G3O-33050-MONOMER"/>
<dbReference type="BioGRID-ORCS" id="855724">
    <property type="hits" value="0 hits in 10 CRISPR screens"/>
</dbReference>
<dbReference type="PRO" id="PR:P53983"/>
<dbReference type="Proteomes" id="UP000002311">
    <property type="component" value="Chromosome XIV"/>
</dbReference>
<dbReference type="RNAct" id="P53983">
    <property type="molecule type" value="protein"/>
</dbReference>
<dbReference type="GO" id="GO:0097658">
    <property type="term" value="C:Asi complex"/>
    <property type="evidence" value="ECO:0000314"/>
    <property type="project" value="SGD"/>
</dbReference>
<dbReference type="GO" id="GO:0005637">
    <property type="term" value="C:nuclear inner membrane"/>
    <property type="evidence" value="ECO:0000314"/>
    <property type="project" value="SGD"/>
</dbReference>
<dbReference type="GO" id="GO:0034399">
    <property type="term" value="C:nuclear periphery"/>
    <property type="evidence" value="ECO:0007005"/>
    <property type="project" value="SGD"/>
</dbReference>
<dbReference type="GO" id="GO:0061630">
    <property type="term" value="F:ubiquitin protein ligase activity"/>
    <property type="evidence" value="ECO:0000318"/>
    <property type="project" value="GO_Central"/>
</dbReference>
<dbReference type="GO" id="GO:0004842">
    <property type="term" value="F:ubiquitin-protein transferase activity"/>
    <property type="evidence" value="ECO:0000316"/>
    <property type="project" value="SGD"/>
</dbReference>
<dbReference type="GO" id="GO:0008270">
    <property type="term" value="F:zinc ion binding"/>
    <property type="evidence" value="ECO:0007669"/>
    <property type="project" value="UniProtKB-KW"/>
</dbReference>
<dbReference type="GO" id="GO:0071230">
    <property type="term" value="P:cellular response to amino acid stimulus"/>
    <property type="evidence" value="ECO:0000315"/>
    <property type="project" value="SGD"/>
</dbReference>
<dbReference type="GO" id="GO:0043161">
    <property type="term" value="P:proteasome-mediated ubiquitin-dependent protein catabolic process"/>
    <property type="evidence" value="ECO:0000315"/>
    <property type="project" value="SGD"/>
</dbReference>
<dbReference type="GO" id="GO:0016567">
    <property type="term" value="P:protein ubiquitination"/>
    <property type="evidence" value="ECO:0000318"/>
    <property type="project" value="GO_Central"/>
</dbReference>
<dbReference type="GO" id="GO:0006511">
    <property type="term" value="P:ubiquitin-dependent protein catabolic process"/>
    <property type="evidence" value="ECO:0000315"/>
    <property type="project" value="SGD"/>
</dbReference>
<dbReference type="CDD" id="cd16616">
    <property type="entry name" value="mRING-HC-C4C4_Asi1p-like"/>
    <property type="match status" value="1"/>
</dbReference>
<dbReference type="Gene3D" id="3.30.40.10">
    <property type="entry name" value="Zinc/RING finger domain, C3HC4 (zinc finger)"/>
    <property type="match status" value="1"/>
</dbReference>
<dbReference type="InterPro" id="IPR013083">
    <property type="entry name" value="Znf_RING/FYVE/PHD"/>
</dbReference>
<dbReference type="PANTHER" id="PTHR22696">
    <property type="entry name" value="E3 UBIQUITIN-PROTEIN LIGASE RNF26"/>
    <property type="match status" value="1"/>
</dbReference>
<dbReference type="PANTHER" id="PTHR22696:SF1">
    <property type="entry name" value="E3 UBIQUITIN-PROTEIN LIGASE RNF26"/>
    <property type="match status" value="1"/>
</dbReference>
<dbReference type="Pfam" id="PF13920">
    <property type="entry name" value="zf-C3HC4_3"/>
    <property type="match status" value="1"/>
</dbReference>
<protein>
    <recommendedName>
        <fullName>Probable ERAD-associated E3 ubiquitin-protein ligase ASI1</fullName>
        <ecNumber>2.3.2.27</ecNumber>
    </recommendedName>
    <alternativeName>
        <fullName>Amino acid sensor-independent protein 3</fullName>
    </alternativeName>
</protein>
<reference key="1">
    <citation type="journal article" date="1997" name="Nature">
        <title>The nucleotide sequence of Saccharomyces cerevisiae chromosome XIV and its evolutionary implications.</title>
        <authorList>
            <person name="Philippsen P."/>
            <person name="Kleine K."/>
            <person name="Poehlmann R."/>
            <person name="Duesterhoeft A."/>
            <person name="Hamberg K."/>
            <person name="Hegemann J.H."/>
            <person name="Obermaier B."/>
            <person name="Urrestarazu L.A."/>
            <person name="Aert R."/>
            <person name="Albermann K."/>
            <person name="Altmann R."/>
            <person name="Andre B."/>
            <person name="Baladron V."/>
            <person name="Ballesta J.P.G."/>
            <person name="Becam A.-M."/>
            <person name="Beinhauer J.D."/>
            <person name="Boskovic J."/>
            <person name="Buitrago M.J."/>
            <person name="Bussereau F."/>
            <person name="Coster F."/>
            <person name="Crouzet M."/>
            <person name="D'Angelo M."/>
            <person name="Dal Pero F."/>
            <person name="De Antoni A."/>
            <person name="del Rey F."/>
            <person name="Doignon F."/>
            <person name="Domdey H."/>
            <person name="Dubois E."/>
            <person name="Fiedler T.A."/>
            <person name="Fleig U."/>
            <person name="Floeth M."/>
            <person name="Fritz C."/>
            <person name="Gaillardin C."/>
            <person name="Garcia-Cantalejo J.M."/>
            <person name="Glansdorff N."/>
            <person name="Goffeau A."/>
            <person name="Gueldener U."/>
            <person name="Herbert C.J."/>
            <person name="Heumann K."/>
            <person name="Heuss-Neitzel D."/>
            <person name="Hilbert H."/>
            <person name="Hinni K."/>
            <person name="Iraqui Houssaini I."/>
            <person name="Jacquet M."/>
            <person name="Jimenez A."/>
            <person name="Jonniaux J.-L."/>
            <person name="Karpfinger-Hartl L."/>
            <person name="Lanfranchi G."/>
            <person name="Lepingle A."/>
            <person name="Levesque H."/>
            <person name="Lyck R."/>
            <person name="Maftahi M."/>
            <person name="Mallet L."/>
            <person name="Maurer C.T.C."/>
            <person name="Messenguy F."/>
            <person name="Mewes H.-W."/>
            <person name="Moestl D."/>
            <person name="Nasr F."/>
            <person name="Nicaud J.-M."/>
            <person name="Niedenthal R.K."/>
            <person name="Pandolfo D."/>
            <person name="Pierard A."/>
            <person name="Piravandi E."/>
            <person name="Planta R.J."/>
            <person name="Pohl T.M."/>
            <person name="Purnelle B."/>
            <person name="Rebischung C."/>
            <person name="Remacha M.A."/>
            <person name="Revuelta J.L."/>
            <person name="Rinke M."/>
            <person name="Saiz J.E."/>
            <person name="Sartorello F."/>
            <person name="Scherens B."/>
            <person name="Sen-Gupta M."/>
            <person name="Soler-Mira A."/>
            <person name="Urbanus J.H.M."/>
            <person name="Valle G."/>
            <person name="Van Dyck L."/>
            <person name="Verhasselt P."/>
            <person name="Vierendeels F."/>
            <person name="Vissers S."/>
            <person name="Voet M."/>
            <person name="Volckaert G."/>
            <person name="Wach A."/>
            <person name="Wambutt R."/>
            <person name="Wedler H."/>
            <person name="Zollner A."/>
            <person name="Hani J."/>
        </authorList>
    </citation>
    <scope>NUCLEOTIDE SEQUENCE [LARGE SCALE GENOMIC DNA]</scope>
    <source>
        <strain>ATCC 204508 / S288c</strain>
    </source>
</reference>
<reference key="2">
    <citation type="journal article" date="2014" name="G3 (Bethesda)">
        <title>The reference genome sequence of Saccharomyces cerevisiae: Then and now.</title>
        <authorList>
            <person name="Engel S.R."/>
            <person name="Dietrich F.S."/>
            <person name="Fisk D.G."/>
            <person name="Binkley G."/>
            <person name="Balakrishnan R."/>
            <person name="Costanzo M.C."/>
            <person name="Dwight S.S."/>
            <person name="Hitz B.C."/>
            <person name="Karra K."/>
            <person name="Nash R.S."/>
            <person name="Weng S."/>
            <person name="Wong E.D."/>
            <person name="Lloyd P."/>
            <person name="Skrzypek M.S."/>
            <person name="Miyasato S.R."/>
            <person name="Simison M."/>
            <person name="Cherry J.M."/>
        </authorList>
    </citation>
    <scope>GENOME REANNOTATION</scope>
    <scope>SEQUENCE REVISION</scope>
    <source>
        <strain>ATCC 204508 / S288c</strain>
    </source>
</reference>
<reference key="3">
    <citation type="journal article" date="2001" name="Genetics">
        <title>Suppressors of ssy1 and ptr3 null mutations define novel amino acid sensor-independent genes in Saccharomyces cerevisiae.</title>
        <authorList>
            <person name="Forsberg H."/>
            <person name="Hammar M."/>
            <person name="Andreasson C."/>
            <person name="Moliner A."/>
            <person name="Ljungdahl P.O."/>
        </authorList>
    </citation>
    <scope>FUNCTION</scope>
</reference>
<reference key="4">
    <citation type="journal article" date="2003" name="Nature">
        <title>Global analysis of protein localization in budding yeast.</title>
        <authorList>
            <person name="Huh W.-K."/>
            <person name="Falvo J.V."/>
            <person name="Gerke L.C."/>
            <person name="Carroll A.S."/>
            <person name="Howson R.W."/>
            <person name="Weissman J.S."/>
            <person name="O'Shea E.K."/>
        </authorList>
    </citation>
    <scope>SUBCELLULAR LOCATION [LARGE SCALE ANALYSIS]</scope>
</reference>
<reference key="5">
    <citation type="journal article" date="2006" name="Proc. Natl. Acad. Sci. U.S.A.">
        <title>A global topology map of the Saccharomyces cerevisiae membrane proteome.</title>
        <authorList>
            <person name="Kim H."/>
            <person name="Melen K."/>
            <person name="Oesterberg M."/>
            <person name="von Heijne G."/>
        </authorList>
    </citation>
    <scope>TOPOLOGY [LARGE SCALE ANALYSIS]</scope>
    <source>
        <strain>ATCC 208353 / W303-1A</strain>
    </source>
</reference>
<reference key="6">
    <citation type="journal article" date="2007" name="J. Biol. Chem.">
        <title>Inner nuclear membrane proteins Asi1, Asi2, and Asi3 function in concert to maintain the latent properties of transcription factors Stp1 and Stp2.</title>
        <authorList>
            <person name="Zargari A."/>
            <person name="Boban M."/>
            <person name="Heessen S."/>
            <person name="Andreasson C."/>
            <person name="Thyberg J."/>
            <person name="Ljungdahl P.O."/>
        </authorList>
    </citation>
    <scope>FUNCTION</scope>
    <scope>SUBCELLULAR LOCATION</scope>
    <scope>GLYCOSYLATION</scope>
    <scope>INTERACTION WITH ASI1</scope>
</reference>
<reference key="7">
    <citation type="journal article" date="2014" name="Science">
        <title>Quality control of inner nuclear membrane proteins by the Asi complex.</title>
        <authorList>
            <person name="Foresti O."/>
            <person name="Rodriguez-Vaello V."/>
            <person name="Funaya C."/>
            <person name="Carvalho P."/>
        </authorList>
    </citation>
    <scope>FUNCTION</scope>
    <scope>SUBUNIT</scope>
</reference>
<proteinExistence type="evidence at protein level"/>
<evidence type="ECO:0000255" key="1"/>
<evidence type="ECO:0000255" key="2">
    <source>
        <dbReference type="PROSITE-ProRule" id="PRU00175"/>
    </source>
</evidence>
<evidence type="ECO:0000255" key="3">
    <source>
        <dbReference type="PROSITE-ProRule" id="PRU00498"/>
    </source>
</evidence>
<evidence type="ECO:0000269" key="4">
    <source>
    </source>
</evidence>
<evidence type="ECO:0000269" key="5">
    <source>
    </source>
</evidence>
<evidence type="ECO:0000269" key="6">
    <source>
    </source>
</evidence>
<evidence type="ECO:0000269" key="7">
    <source>
    </source>
</evidence>
<evidence type="ECO:0000269" key="8">
    <source>
    </source>
</evidence>
<evidence type="ECO:0000305" key="9"/>
<evidence type="ECO:0000305" key="10">
    <source>
    </source>
</evidence>
<evidence type="ECO:0000305" key="11">
    <source>
    </source>
</evidence>
<sequence>MSTNILQHVKQLLHNRDVFSFFHNKTGNLNYLDNTTQKPEVFVSPNSTIVSAPTLDSFQALMEKGNFTTLQLAKVGIRMFFSYSVSKYAVLCFSTAIILNRLTVMSSLRSNSTNIRLPLWSKTLLHLVATLSLVKALLQILSQFGLMHELHVSDTDFYALSVYLFVALSDCIEIFISSTTNVPSLICSDFSIWGLSLNLYIISKMPAGQQHIGDNVELLGAVFHRLVIHLVELFHIRAYRLCGEVILNAGFFTAFVTRTYLNGLDFINICLIHNYFPGFFYISTILLASIGIFLKALFTSNPFRSLYSRYKNLEKWWRSNNYNGEEEFNEIALSLCLLLTSNDYKIFKKSDNVKSVDEVAAFSNSYVVSGHLNQLQSTPEDLLSRKEMTTDSQLPGFARTYLGLFELVRTIILTYSRLLKNLLWSKNFESSIDKKPRVGKRKKRDLNKYVTEKNYKKFLYKPDVKELNIESDLRSLELLLPEDDSSKDYFPPRKIDESVSDEEFDSDMESQLIIDEEKELTHLSSNAVDSDDLEEIAWNISMWSILNYEMDVHNKVNGPLTRSQYGKRNPQGVLVDVVIERLLHHTNSRYMYKRLNMKDDDKLEFKFDFAFDSCDEVEEMDLSCLICKVNKRNIVTWPCRCLALCDDCRISLGYKGFATCVSCDSEVKGYSKLNIV</sequence>
<feature type="chain" id="PRO_0000203467" description="Probable ERAD-associated E3 ubiquitin-protein ligase ASI1">
    <location>
        <begin position="1"/>
        <end position="676"/>
    </location>
</feature>
<feature type="topological domain" description="Perinuclear space" evidence="11">
    <location>
        <begin position="1"/>
        <end position="78"/>
    </location>
</feature>
<feature type="transmembrane region" description="Helical" evidence="1">
    <location>
        <begin position="79"/>
        <end position="99"/>
    </location>
</feature>
<feature type="topological domain" description="Nuclear" evidence="11">
    <location>
        <begin position="100"/>
        <end position="126"/>
    </location>
</feature>
<feature type="transmembrane region" description="Helical" evidence="1">
    <location>
        <begin position="127"/>
        <end position="147"/>
    </location>
</feature>
<feature type="topological domain" description="Perinuclear space" evidence="11">
    <location>
        <begin position="148"/>
        <end position="156"/>
    </location>
</feature>
<feature type="transmembrane region" description="Helical" evidence="1">
    <location>
        <begin position="157"/>
        <end position="177"/>
    </location>
</feature>
<feature type="topological domain" description="Nuclear" evidence="11">
    <location>
        <begin position="178"/>
        <end position="181"/>
    </location>
</feature>
<feature type="transmembrane region" description="Helical" evidence="1">
    <location>
        <begin position="182"/>
        <end position="202"/>
    </location>
</feature>
<feature type="topological domain" description="Perinuclear space" evidence="11">
    <location>
        <begin position="203"/>
        <end position="277"/>
    </location>
</feature>
<feature type="transmembrane region" description="Helical" evidence="1">
    <location>
        <begin position="278"/>
        <end position="298"/>
    </location>
</feature>
<feature type="topological domain" description="Nuclear" evidence="6">
    <location>
        <begin position="299"/>
        <end position="676"/>
    </location>
</feature>
<feature type="zinc finger region" description="RING-type; atypical" evidence="2">
    <location>
        <begin position="624"/>
        <end position="664"/>
    </location>
</feature>
<feature type="glycosylation site" description="N-linked (GlcNAc...) asparagine" evidence="3">
    <location>
        <position position="24"/>
    </location>
</feature>
<feature type="glycosylation site" description="N-linked (GlcNAc...) asparagine" evidence="3">
    <location>
        <position position="34"/>
    </location>
</feature>
<feature type="glycosylation site" description="N-linked (GlcNAc...) asparagine" evidence="3">
    <location>
        <position position="46"/>
    </location>
</feature>
<feature type="glycosylation site" description="N-linked (GlcNAc...) asparagine" evidence="3">
    <location>
        <position position="66"/>
    </location>
</feature>
<feature type="sequence conflict" description="In Ref. 1; CAA95867/CAA95868." evidence="9" ref="1">
    <original>MSTNILQHVKQLLHN</original>
    <variation>MLSNCSIT</variation>
    <location>
        <begin position="1"/>
        <end position="15"/>
    </location>
</feature>
<comment type="function">
    <text evidence="4 7 8">Part of the nuclear inner membrane (INM)-specific branch of the ER-associated degradation (ERAD) pathway, required for the elimination of misfolded proteins in the INM, a specialized ER subdomain. Required for ERG11 degradation (PubMed:25236469). Negative regulator of SPS-sensor signaling. Together with ASI2 and ASI3, prevents the unprocessed precursor forms of STP1 and STP2 that escape cytoplasmic anchoring from inducing SPS-sensor-regulated genes in the absence of inducing signals (PubMed:17085444). Controls amino acid permease (AAP) gene expression in response to amino acid availability, a process mediated by the transcription factors STP1 and STP1 (PubMed:11454748).</text>
</comment>
<comment type="catalytic activity">
    <reaction evidence="10">
        <text>S-ubiquitinyl-[E2 ubiquitin-conjugating enzyme]-L-cysteine + [acceptor protein]-L-lysine = [E2 ubiquitin-conjugating enzyme]-L-cysteine + N(6)-ubiquitinyl-[acceptor protein]-L-lysine.</text>
        <dbReference type="EC" id="2.3.2.27"/>
    </reaction>
</comment>
<comment type="subunit">
    <text evidence="7 8">Component of the Asi complex, which contains ASI1, ASI2 and ASI3 (PubMed:25236469). Interacts directly with ASI1 (PubMed:17085444).</text>
</comment>
<comment type="interaction">
    <interactant intactId="EBI-28603">
        <id>P53983</id>
    </interactant>
    <interactant intactId="EBI-27241">
        <id>P54074</id>
        <label>ASI1</label>
    </interactant>
    <organismsDiffer>false</organismsDiffer>
    <experiments>5</experiments>
</comment>
<comment type="subcellular location">
    <subcellularLocation>
        <location evidence="5 7">Nucleus inner membrane</location>
        <topology evidence="5 7">Multi-pass membrane protein</topology>
    </subcellularLocation>
</comment>
<organism>
    <name type="scientific">Saccharomyces cerevisiae (strain ATCC 204508 / S288c)</name>
    <name type="common">Baker's yeast</name>
    <dbReference type="NCBI Taxonomy" id="559292"/>
    <lineage>
        <taxon>Eukaryota</taxon>
        <taxon>Fungi</taxon>
        <taxon>Dikarya</taxon>
        <taxon>Ascomycota</taxon>
        <taxon>Saccharomycotina</taxon>
        <taxon>Saccharomycetes</taxon>
        <taxon>Saccharomycetales</taxon>
        <taxon>Saccharomycetaceae</taxon>
        <taxon>Saccharomyces</taxon>
    </lineage>
</organism>
<accession>P53983</accession>
<accession>D6W1G9</accession>
<gene>
    <name type="primary">ASI3</name>
    <name type="ordered locus">YNL008C</name>
    <name type="ORF">N2874</name>
</gene>
<keyword id="KW-0325">Glycoprotein</keyword>
<keyword id="KW-0472">Membrane</keyword>
<keyword id="KW-0479">Metal-binding</keyword>
<keyword id="KW-0539">Nucleus</keyword>
<keyword id="KW-1185">Reference proteome</keyword>
<keyword id="KW-0808">Transferase</keyword>
<keyword id="KW-0812">Transmembrane</keyword>
<keyword id="KW-1133">Transmembrane helix</keyword>
<keyword id="KW-0862">Zinc</keyword>
<keyword id="KW-0863">Zinc-finger</keyword>
<name>ASI3_YEAST</name>